<dbReference type="EC" id="3.2.1.8"/>
<dbReference type="EMBL" id="CM001231">
    <property type="protein sequence ID" value="EHA56406.1"/>
    <property type="molecule type" value="Genomic_DNA"/>
</dbReference>
<dbReference type="RefSeq" id="XP_003709018.1">
    <property type="nucleotide sequence ID" value="XM_003708970.1"/>
</dbReference>
<dbReference type="SMR" id="G4MPQ7"/>
<dbReference type="STRING" id="242507.G4MPQ7"/>
<dbReference type="CAZy" id="CBM1">
    <property type="family name" value="Carbohydrate-Binding Module Family 1"/>
</dbReference>
<dbReference type="CAZy" id="GH10">
    <property type="family name" value="Glycoside Hydrolase Family 10"/>
</dbReference>
<dbReference type="EnsemblFungi" id="MGG_02245T0">
    <property type="protein sequence ID" value="MGG_02245T0"/>
    <property type="gene ID" value="MGG_02245"/>
</dbReference>
<dbReference type="GeneID" id="2681342"/>
<dbReference type="KEGG" id="mgr:MGG_02245"/>
<dbReference type="VEuPathDB" id="FungiDB:MGG_02245"/>
<dbReference type="eggNOG" id="ENOG502QSCW">
    <property type="taxonomic scope" value="Eukaryota"/>
</dbReference>
<dbReference type="HOGENOM" id="CLU_020161_2_1_1"/>
<dbReference type="InParanoid" id="G4MPQ7"/>
<dbReference type="OMA" id="PENQMKW"/>
<dbReference type="OrthoDB" id="3055998at2759"/>
<dbReference type="UniPathway" id="UPA00114"/>
<dbReference type="PHI-base" id="PHI:2207"/>
<dbReference type="Proteomes" id="UP000009058">
    <property type="component" value="Chromosome 1"/>
</dbReference>
<dbReference type="GO" id="GO:0005576">
    <property type="term" value="C:extracellular region"/>
    <property type="evidence" value="ECO:0007669"/>
    <property type="project" value="UniProtKB-SubCell"/>
</dbReference>
<dbReference type="GO" id="GO:0030248">
    <property type="term" value="F:cellulose binding"/>
    <property type="evidence" value="ECO:0007669"/>
    <property type="project" value="InterPro"/>
</dbReference>
<dbReference type="GO" id="GO:0031176">
    <property type="term" value="F:endo-1,4-beta-xylanase activity"/>
    <property type="evidence" value="ECO:0007669"/>
    <property type="project" value="UniProtKB-EC"/>
</dbReference>
<dbReference type="GO" id="GO:0045493">
    <property type="term" value="P:xylan catabolic process"/>
    <property type="evidence" value="ECO:0007669"/>
    <property type="project" value="UniProtKB-UniPathway"/>
</dbReference>
<dbReference type="Gene3D" id="3.20.20.80">
    <property type="entry name" value="Glycosidases"/>
    <property type="match status" value="1"/>
</dbReference>
<dbReference type="InterPro" id="IPR035971">
    <property type="entry name" value="CBD_sf"/>
</dbReference>
<dbReference type="InterPro" id="IPR000254">
    <property type="entry name" value="Cellulose-bd_dom_fun"/>
</dbReference>
<dbReference type="InterPro" id="IPR044846">
    <property type="entry name" value="GH10"/>
</dbReference>
<dbReference type="InterPro" id="IPR001000">
    <property type="entry name" value="GH10_dom"/>
</dbReference>
<dbReference type="InterPro" id="IPR017853">
    <property type="entry name" value="Glycoside_hydrolase_SF"/>
</dbReference>
<dbReference type="PANTHER" id="PTHR31490:SF76">
    <property type="entry name" value="ENDO-1,4-BETA-XYLANASE C"/>
    <property type="match status" value="1"/>
</dbReference>
<dbReference type="PANTHER" id="PTHR31490">
    <property type="entry name" value="GLYCOSYL HYDROLASE"/>
    <property type="match status" value="1"/>
</dbReference>
<dbReference type="Pfam" id="PF00734">
    <property type="entry name" value="CBM_1"/>
    <property type="match status" value="1"/>
</dbReference>
<dbReference type="Pfam" id="PF00331">
    <property type="entry name" value="Glyco_hydro_10"/>
    <property type="match status" value="1"/>
</dbReference>
<dbReference type="PRINTS" id="PR00134">
    <property type="entry name" value="GLHYDRLASE10"/>
</dbReference>
<dbReference type="SMART" id="SM00236">
    <property type="entry name" value="fCBD"/>
    <property type="match status" value="1"/>
</dbReference>
<dbReference type="SMART" id="SM00633">
    <property type="entry name" value="Glyco_10"/>
    <property type="match status" value="1"/>
</dbReference>
<dbReference type="SUPFAM" id="SSF51445">
    <property type="entry name" value="(Trans)glycosidases"/>
    <property type="match status" value="1"/>
</dbReference>
<dbReference type="SUPFAM" id="SSF57180">
    <property type="entry name" value="Cellulose-binding domain"/>
    <property type="match status" value="1"/>
</dbReference>
<dbReference type="PROSITE" id="PS00562">
    <property type="entry name" value="CBM1_1"/>
    <property type="match status" value="1"/>
</dbReference>
<dbReference type="PROSITE" id="PS51164">
    <property type="entry name" value="CBM1_2"/>
    <property type="match status" value="1"/>
</dbReference>
<dbReference type="PROSITE" id="PS51760">
    <property type="entry name" value="GH10_2"/>
    <property type="match status" value="1"/>
</dbReference>
<comment type="function">
    <text evidence="1">Endo-1,4-beta-xylanase involved in the hydrolysis of xylan, a major structural heterogeneous polysaccharide found in plant biomass representing the second most abundant polysaccharide in the biosphere, after cellulose.</text>
</comment>
<comment type="catalytic activity">
    <reaction>
        <text>Endohydrolysis of (1-&gt;4)-beta-D-xylosidic linkages in xylans.</text>
        <dbReference type="EC" id="3.2.1.8"/>
    </reaction>
</comment>
<comment type="pathway">
    <text>Glycan degradation; xylan degradation.</text>
</comment>
<comment type="subcellular location">
    <subcellularLocation>
        <location evidence="1">Secreted</location>
    </subcellularLocation>
</comment>
<comment type="similarity">
    <text evidence="5">Belongs to the glycosyl hydrolase 10 (cellulase F) family.</text>
</comment>
<name>XYN6_PYRO7</name>
<reference key="1">
    <citation type="journal article" date="2005" name="Nature">
        <title>The genome sequence of the rice blast fungus Magnaporthe grisea.</title>
        <authorList>
            <person name="Dean R.A."/>
            <person name="Talbot N.J."/>
            <person name="Ebbole D.J."/>
            <person name="Farman M.L."/>
            <person name="Mitchell T.K."/>
            <person name="Orbach M.J."/>
            <person name="Thon M.R."/>
            <person name="Kulkarni R."/>
            <person name="Xu J.-R."/>
            <person name="Pan H."/>
            <person name="Read N.D."/>
            <person name="Lee Y.-H."/>
            <person name="Carbone I."/>
            <person name="Brown D."/>
            <person name="Oh Y.Y."/>
            <person name="Donofrio N."/>
            <person name="Jeong J.S."/>
            <person name="Soanes D.M."/>
            <person name="Djonovic S."/>
            <person name="Kolomiets E."/>
            <person name="Rehmeyer C."/>
            <person name="Li W."/>
            <person name="Harding M."/>
            <person name="Kim S."/>
            <person name="Lebrun M.-H."/>
            <person name="Bohnert H."/>
            <person name="Coughlan S."/>
            <person name="Butler J."/>
            <person name="Calvo S.E."/>
            <person name="Ma L.-J."/>
            <person name="Nicol R."/>
            <person name="Purcell S."/>
            <person name="Nusbaum C."/>
            <person name="Galagan J.E."/>
            <person name="Birren B.W."/>
        </authorList>
    </citation>
    <scope>NUCLEOTIDE SEQUENCE [LARGE SCALE GENOMIC DNA]</scope>
    <source>
        <strain>70-15 / ATCC MYA-4617 / FGSC 8958</strain>
    </source>
</reference>
<sequence length="380" mass="40868">MRTPAIVLALAPAAAFGQAALWGQCGGQGWTGAKTCVSGAVCQAQNEWYSQCVPGSGGGNPPTPQPTQPSNPPPSTGSGLNAKFKNKGKLYFGTSMDHYDLNKAQLTNIVKAQFGQITNENSMKWDAIEPSRNSFSWTNADAVVNFATANGKLMRGHTLLWHSQLPAWVSNINDRNTLTQVIQNHVTAMVTRYRGKILQWDVVNEIFAEDGSLRSSVFSRVLGEDFVGIAFRAARAADPNAKLYINDYNLDIANYAKVTRGMVEKVNKWVSQGIPIDGIGSQAHLAQPGGWNPASGVPAALRALAAANVKEIAITELDIAGASANDYVTVVNACLQISKCVGITVWGVSDAISWRPNDNPLLYDRNYQPKAAYTAIMNAL</sequence>
<protein>
    <recommendedName>
        <fullName>Endo-1,4-beta-xylanase 6</fullName>
        <shortName>Xylanase 6</shortName>
        <ecNumber>3.2.1.8</ecNumber>
    </recommendedName>
    <alternativeName>
        <fullName>1,4-beta-D-xylan xylanohydrolase 6</fullName>
    </alternativeName>
</protein>
<accession>G4MPQ7</accession>
<evidence type="ECO:0000250" key="1"/>
<evidence type="ECO:0000255" key="2">
    <source>
        <dbReference type="PROSITE-ProRule" id="PRU00597"/>
    </source>
</evidence>
<evidence type="ECO:0000255" key="3">
    <source>
        <dbReference type="PROSITE-ProRule" id="PRU01096"/>
    </source>
</evidence>
<evidence type="ECO:0000256" key="4">
    <source>
        <dbReference type="SAM" id="MobiDB-lite"/>
    </source>
</evidence>
<evidence type="ECO:0000305" key="5"/>
<proteinExistence type="inferred from homology"/>
<organism>
    <name type="scientific">Pyricularia oryzae (strain 70-15 / ATCC MYA-4617 / FGSC 8958)</name>
    <name type="common">Rice blast fungus</name>
    <name type="synonym">Magnaporthe oryzae</name>
    <dbReference type="NCBI Taxonomy" id="242507"/>
    <lineage>
        <taxon>Eukaryota</taxon>
        <taxon>Fungi</taxon>
        <taxon>Dikarya</taxon>
        <taxon>Ascomycota</taxon>
        <taxon>Pezizomycotina</taxon>
        <taxon>Sordariomycetes</taxon>
        <taxon>Sordariomycetidae</taxon>
        <taxon>Magnaporthales</taxon>
        <taxon>Pyriculariaceae</taxon>
        <taxon>Pyricularia</taxon>
    </lineage>
</organism>
<keyword id="KW-0119">Carbohydrate metabolism</keyword>
<keyword id="KW-1015">Disulfide bond</keyword>
<keyword id="KW-0326">Glycosidase</keyword>
<keyword id="KW-0378">Hydrolase</keyword>
<keyword id="KW-0624">Polysaccharide degradation</keyword>
<keyword id="KW-1185">Reference proteome</keyword>
<keyword id="KW-0964">Secreted</keyword>
<keyword id="KW-0732">Signal</keyword>
<keyword id="KW-0858">Xylan degradation</keyword>
<gene>
    <name type="primary">XYL6</name>
    <name type="ORF">MGG_02245</name>
</gene>
<feature type="signal peptide">
    <location>
        <begin position="1"/>
        <end position="21"/>
    </location>
</feature>
<feature type="chain" id="PRO_0000429629" description="Endo-1,4-beta-xylanase 6">
    <location>
        <begin position="22"/>
        <end position="380"/>
    </location>
</feature>
<feature type="domain" description="CBM1" evidence="2">
    <location>
        <begin position="22"/>
        <end position="53"/>
    </location>
</feature>
<feature type="domain" description="GH10" evidence="3">
    <location>
        <begin position="74"/>
        <end position="379"/>
    </location>
</feature>
<feature type="region of interest" description="Disordered" evidence="4">
    <location>
        <begin position="53"/>
        <end position="80"/>
    </location>
</feature>
<feature type="compositionally biased region" description="Pro residues" evidence="4">
    <location>
        <begin position="61"/>
        <end position="75"/>
    </location>
</feature>
<feature type="active site" description="Proton donor" evidence="1">
    <location>
        <position position="205"/>
    </location>
</feature>
<feature type="active site" description="Nucleophile" evidence="1">
    <location>
        <position position="316"/>
    </location>
</feature>
<feature type="disulfide bond" evidence="1">
    <location>
        <begin position="334"/>
        <end position="340"/>
    </location>
</feature>